<name>RL15_KOSOT</name>
<accession>C5CGI3</accession>
<reference key="1">
    <citation type="submission" date="2009-06" db="EMBL/GenBank/DDBJ databases">
        <title>Complete sequence of Thermotogales bacterium TBF 19.5.1.</title>
        <authorList>
            <consortium name="US DOE Joint Genome Institute"/>
            <person name="Lucas S."/>
            <person name="Copeland A."/>
            <person name="Lapidus A."/>
            <person name="Glavina del Rio T."/>
            <person name="Tice H."/>
            <person name="Bruce D."/>
            <person name="Goodwin L."/>
            <person name="Pitluck S."/>
            <person name="Chertkov O."/>
            <person name="Brettin T."/>
            <person name="Detter J.C."/>
            <person name="Han C."/>
            <person name="Schmutz J."/>
            <person name="Larimer F."/>
            <person name="Land M."/>
            <person name="Hauser L."/>
            <person name="Kyrpides N."/>
            <person name="Ovchinnikova G."/>
            <person name="Noll K."/>
        </authorList>
    </citation>
    <scope>NUCLEOTIDE SEQUENCE [LARGE SCALE GENOMIC DNA]</scope>
    <source>
        <strain>ATCC BAA-1733 / DSM 21960 / TBF 19.5.1</strain>
    </source>
</reference>
<comment type="function">
    <text evidence="1">Binds to the 23S rRNA.</text>
</comment>
<comment type="subunit">
    <text evidence="1">Part of the 50S ribosomal subunit.</text>
</comment>
<comment type="similarity">
    <text evidence="1">Belongs to the universal ribosomal protein uL15 family.</text>
</comment>
<keyword id="KW-1185">Reference proteome</keyword>
<keyword id="KW-0687">Ribonucleoprotein</keyword>
<keyword id="KW-0689">Ribosomal protein</keyword>
<keyword id="KW-0694">RNA-binding</keyword>
<keyword id="KW-0699">rRNA-binding</keyword>
<feature type="chain" id="PRO_1000214709" description="Large ribosomal subunit protein uL15">
    <location>
        <begin position="1"/>
        <end position="148"/>
    </location>
</feature>
<feature type="region of interest" description="Disordered" evidence="2">
    <location>
        <begin position="1"/>
        <end position="47"/>
    </location>
</feature>
<protein>
    <recommendedName>
        <fullName evidence="1">Large ribosomal subunit protein uL15</fullName>
    </recommendedName>
    <alternativeName>
        <fullName evidence="3">50S ribosomal protein L15</fullName>
    </alternativeName>
</protein>
<organism>
    <name type="scientific">Kosmotoga olearia (strain ATCC BAA-1733 / DSM 21960 / TBF 19.5.1)</name>
    <dbReference type="NCBI Taxonomy" id="521045"/>
    <lineage>
        <taxon>Bacteria</taxon>
        <taxon>Thermotogati</taxon>
        <taxon>Thermotogota</taxon>
        <taxon>Thermotogae</taxon>
        <taxon>Kosmotogales</taxon>
        <taxon>Kosmotogaceae</taxon>
        <taxon>Kosmotoga</taxon>
    </lineage>
</organism>
<proteinExistence type="inferred from homology"/>
<sequence length="148" mass="16130">MAFSLENLRPAPGSRPKSKRVGRGSSSGKGKTSSRGHKGQGRGTGKVRMFFEGGQTPLFRRIPIKGFKNRNAKEYVIINLSTLEEVFEEGNVITPEILLEKKIIKNLKDGVKILGKGELTKALVVKAHAFSRTAKEKIEAVGGKAEVI</sequence>
<dbReference type="EMBL" id="CP001634">
    <property type="protein sequence ID" value="ACR80564.1"/>
    <property type="molecule type" value="Genomic_DNA"/>
</dbReference>
<dbReference type="RefSeq" id="WP_015869207.1">
    <property type="nucleotide sequence ID" value="NC_012785.1"/>
</dbReference>
<dbReference type="SMR" id="C5CGI3"/>
<dbReference type="STRING" id="521045.Kole_1883"/>
<dbReference type="KEGG" id="kol:Kole_1883"/>
<dbReference type="eggNOG" id="COG0200">
    <property type="taxonomic scope" value="Bacteria"/>
</dbReference>
<dbReference type="HOGENOM" id="CLU_055188_4_1_0"/>
<dbReference type="OrthoDB" id="9810293at2"/>
<dbReference type="Proteomes" id="UP000002382">
    <property type="component" value="Chromosome"/>
</dbReference>
<dbReference type="GO" id="GO:0022625">
    <property type="term" value="C:cytosolic large ribosomal subunit"/>
    <property type="evidence" value="ECO:0007669"/>
    <property type="project" value="TreeGrafter"/>
</dbReference>
<dbReference type="GO" id="GO:0019843">
    <property type="term" value="F:rRNA binding"/>
    <property type="evidence" value="ECO:0007669"/>
    <property type="project" value="UniProtKB-UniRule"/>
</dbReference>
<dbReference type="GO" id="GO:0003735">
    <property type="term" value="F:structural constituent of ribosome"/>
    <property type="evidence" value="ECO:0007669"/>
    <property type="project" value="InterPro"/>
</dbReference>
<dbReference type="GO" id="GO:0006412">
    <property type="term" value="P:translation"/>
    <property type="evidence" value="ECO:0007669"/>
    <property type="project" value="UniProtKB-UniRule"/>
</dbReference>
<dbReference type="FunFam" id="3.100.10.10:FF:000005">
    <property type="entry name" value="50S ribosomal protein L15"/>
    <property type="match status" value="1"/>
</dbReference>
<dbReference type="Gene3D" id="3.100.10.10">
    <property type="match status" value="1"/>
</dbReference>
<dbReference type="HAMAP" id="MF_01341">
    <property type="entry name" value="Ribosomal_uL15"/>
    <property type="match status" value="1"/>
</dbReference>
<dbReference type="InterPro" id="IPR030878">
    <property type="entry name" value="Ribosomal_uL15"/>
</dbReference>
<dbReference type="InterPro" id="IPR021131">
    <property type="entry name" value="Ribosomal_uL15/eL18"/>
</dbReference>
<dbReference type="InterPro" id="IPR036227">
    <property type="entry name" value="Ribosomal_uL15/eL18_sf"/>
</dbReference>
<dbReference type="InterPro" id="IPR005749">
    <property type="entry name" value="Ribosomal_uL15_bac-type"/>
</dbReference>
<dbReference type="InterPro" id="IPR001196">
    <property type="entry name" value="Ribosomal_uL15_CS"/>
</dbReference>
<dbReference type="NCBIfam" id="TIGR01071">
    <property type="entry name" value="rplO_bact"/>
    <property type="match status" value="1"/>
</dbReference>
<dbReference type="PANTHER" id="PTHR12934">
    <property type="entry name" value="50S RIBOSOMAL PROTEIN L15"/>
    <property type="match status" value="1"/>
</dbReference>
<dbReference type="PANTHER" id="PTHR12934:SF11">
    <property type="entry name" value="LARGE RIBOSOMAL SUBUNIT PROTEIN UL15M"/>
    <property type="match status" value="1"/>
</dbReference>
<dbReference type="Pfam" id="PF00828">
    <property type="entry name" value="Ribosomal_L27A"/>
    <property type="match status" value="1"/>
</dbReference>
<dbReference type="SUPFAM" id="SSF52080">
    <property type="entry name" value="Ribosomal proteins L15p and L18e"/>
    <property type="match status" value="1"/>
</dbReference>
<dbReference type="PROSITE" id="PS00475">
    <property type="entry name" value="RIBOSOMAL_L15"/>
    <property type="match status" value="1"/>
</dbReference>
<gene>
    <name evidence="1" type="primary">rplO</name>
    <name type="ordered locus">Kole_1883</name>
</gene>
<evidence type="ECO:0000255" key="1">
    <source>
        <dbReference type="HAMAP-Rule" id="MF_01341"/>
    </source>
</evidence>
<evidence type="ECO:0000256" key="2">
    <source>
        <dbReference type="SAM" id="MobiDB-lite"/>
    </source>
</evidence>
<evidence type="ECO:0000305" key="3"/>